<keyword id="KW-0285">Flavoprotein</keyword>
<keyword id="KW-0288">FMN</keyword>
<keyword id="KW-0520">NAD</keyword>
<keyword id="KW-0560">Oxidoreductase</keyword>
<keyword id="KW-1185">Reference proteome</keyword>
<name>AZOR_METSB</name>
<protein>
    <recommendedName>
        <fullName evidence="1">FMN-dependent NADH:quinone oxidoreductase</fullName>
        <ecNumber evidence="1">1.6.5.-</ecNumber>
    </recommendedName>
    <alternativeName>
        <fullName evidence="1">Azo-dye reductase</fullName>
    </alternativeName>
    <alternativeName>
        <fullName evidence="1">FMN-dependent NADH-azo compound oxidoreductase</fullName>
    </alternativeName>
    <alternativeName>
        <fullName evidence="1">FMN-dependent NADH-azoreductase</fullName>
        <ecNumber evidence="1">1.7.1.17</ecNumber>
    </alternativeName>
</protein>
<comment type="function">
    <text evidence="1">Quinone reductase that provides resistance to thiol-specific stress caused by electrophilic quinones.</text>
</comment>
<comment type="function">
    <text evidence="1">Also exhibits azoreductase activity. Catalyzes the reductive cleavage of the azo bond in aromatic azo compounds to the corresponding amines.</text>
</comment>
<comment type="catalytic activity">
    <reaction evidence="1">
        <text>2 a quinone + NADH + H(+) = 2 a 1,4-benzosemiquinone + NAD(+)</text>
        <dbReference type="Rhea" id="RHEA:65952"/>
        <dbReference type="ChEBI" id="CHEBI:15378"/>
        <dbReference type="ChEBI" id="CHEBI:57540"/>
        <dbReference type="ChEBI" id="CHEBI:57945"/>
        <dbReference type="ChEBI" id="CHEBI:132124"/>
        <dbReference type="ChEBI" id="CHEBI:134225"/>
    </reaction>
</comment>
<comment type="catalytic activity">
    <reaction evidence="1">
        <text>N,N-dimethyl-1,4-phenylenediamine + anthranilate + 2 NAD(+) = 2-(4-dimethylaminophenyl)diazenylbenzoate + 2 NADH + 2 H(+)</text>
        <dbReference type="Rhea" id="RHEA:55872"/>
        <dbReference type="ChEBI" id="CHEBI:15378"/>
        <dbReference type="ChEBI" id="CHEBI:15783"/>
        <dbReference type="ChEBI" id="CHEBI:16567"/>
        <dbReference type="ChEBI" id="CHEBI:57540"/>
        <dbReference type="ChEBI" id="CHEBI:57945"/>
        <dbReference type="ChEBI" id="CHEBI:71579"/>
        <dbReference type="EC" id="1.7.1.17"/>
    </reaction>
</comment>
<comment type="cofactor">
    <cofactor evidence="1">
        <name>FMN</name>
        <dbReference type="ChEBI" id="CHEBI:58210"/>
    </cofactor>
    <text evidence="1">Binds 1 FMN per subunit.</text>
</comment>
<comment type="subunit">
    <text evidence="1">Homodimer.</text>
</comment>
<comment type="similarity">
    <text evidence="1">Belongs to the azoreductase type 1 family.</text>
</comment>
<proteinExistence type="inferred from homology"/>
<gene>
    <name evidence="1" type="primary">azoR</name>
    <name type="ordered locus">Msil_0447</name>
</gene>
<sequence>MKLLHIDSSILGDHSVSRQLTAAIIARLQEVTPDLDVSHRDLAANPLSHLSGALLAASAPGAPAPDPSTQAALGESAAILAEFLAADIVVVGAPMYNFAISSQLKAWIDRLVIAGKTFRYADGAVEGLAGGRRLIIASSRGGVFEAGAAAAALDYQETYLRAIFGFIGIADVEIIRAEGLAFGEDARALAIKQAGDAILRLEAA</sequence>
<evidence type="ECO:0000255" key="1">
    <source>
        <dbReference type="HAMAP-Rule" id="MF_01216"/>
    </source>
</evidence>
<feature type="chain" id="PRO_1000164761" description="FMN-dependent NADH:quinone oxidoreductase">
    <location>
        <begin position="1"/>
        <end position="204"/>
    </location>
</feature>
<feature type="binding site" evidence="1">
    <location>
        <position position="9"/>
    </location>
    <ligand>
        <name>FMN</name>
        <dbReference type="ChEBI" id="CHEBI:58210"/>
    </ligand>
</feature>
<feature type="binding site" evidence="1">
    <location>
        <begin position="15"/>
        <end position="17"/>
    </location>
    <ligand>
        <name>FMN</name>
        <dbReference type="ChEBI" id="CHEBI:58210"/>
    </ligand>
</feature>
<feature type="binding site" evidence="1">
    <location>
        <begin position="95"/>
        <end position="98"/>
    </location>
    <ligand>
        <name>FMN</name>
        <dbReference type="ChEBI" id="CHEBI:58210"/>
    </ligand>
</feature>
<feature type="binding site" evidence="1">
    <location>
        <begin position="139"/>
        <end position="142"/>
    </location>
    <ligand>
        <name>FMN</name>
        <dbReference type="ChEBI" id="CHEBI:58210"/>
    </ligand>
</feature>
<dbReference type="EC" id="1.6.5.-" evidence="1"/>
<dbReference type="EC" id="1.7.1.17" evidence="1"/>
<dbReference type="EMBL" id="CP001280">
    <property type="protein sequence ID" value="ACK49421.1"/>
    <property type="molecule type" value="Genomic_DNA"/>
</dbReference>
<dbReference type="RefSeq" id="WP_012589491.1">
    <property type="nucleotide sequence ID" value="NC_011666.1"/>
</dbReference>
<dbReference type="SMR" id="B8EJL7"/>
<dbReference type="STRING" id="395965.Msil_0447"/>
<dbReference type="KEGG" id="msl:Msil_0447"/>
<dbReference type="eggNOG" id="COG1182">
    <property type="taxonomic scope" value="Bacteria"/>
</dbReference>
<dbReference type="HOGENOM" id="CLU_088964_0_0_5"/>
<dbReference type="OrthoDB" id="9787136at2"/>
<dbReference type="Proteomes" id="UP000002257">
    <property type="component" value="Chromosome"/>
</dbReference>
<dbReference type="GO" id="GO:0009055">
    <property type="term" value="F:electron transfer activity"/>
    <property type="evidence" value="ECO:0007669"/>
    <property type="project" value="UniProtKB-UniRule"/>
</dbReference>
<dbReference type="GO" id="GO:0010181">
    <property type="term" value="F:FMN binding"/>
    <property type="evidence" value="ECO:0007669"/>
    <property type="project" value="UniProtKB-UniRule"/>
</dbReference>
<dbReference type="GO" id="GO:0016652">
    <property type="term" value="F:oxidoreductase activity, acting on NAD(P)H as acceptor"/>
    <property type="evidence" value="ECO:0007669"/>
    <property type="project" value="UniProtKB-UniRule"/>
</dbReference>
<dbReference type="GO" id="GO:0016655">
    <property type="term" value="F:oxidoreductase activity, acting on NAD(P)H, quinone or similar compound as acceptor"/>
    <property type="evidence" value="ECO:0007669"/>
    <property type="project" value="InterPro"/>
</dbReference>
<dbReference type="Gene3D" id="3.40.50.360">
    <property type="match status" value="1"/>
</dbReference>
<dbReference type="HAMAP" id="MF_01216">
    <property type="entry name" value="Azoreductase_type1"/>
    <property type="match status" value="1"/>
</dbReference>
<dbReference type="InterPro" id="IPR003680">
    <property type="entry name" value="Flavodoxin_fold"/>
</dbReference>
<dbReference type="InterPro" id="IPR029039">
    <property type="entry name" value="Flavoprotein-like_sf"/>
</dbReference>
<dbReference type="InterPro" id="IPR050104">
    <property type="entry name" value="FMN-dep_NADH:Q_OxRdtase_AzoR1"/>
</dbReference>
<dbReference type="InterPro" id="IPR023048">
    <property type="entry name" value="NADH:quinone_OxRdtase_FMN_depd"/>
</dbReference>
<dbReference type="PANTHER" id="PTHR43741">
    <property type="entry name" value="FMN-DEPENDENT NADH-AZOREDUCTASE 1"/>
    <property type="match status" value="1"/>
</dbReference>
<dbReference type="PANTHER" id="PTHR43741:SF4">
    <property type="entry name" value="FMN-DEPENDENT NADH:QUINONE OXIDOREDUCTASE"/>
    <property type="match status" value="1"/>
</dbReference>
<dbReference type="Pfam" id="PF02525">
    <property type="entry name" value="Flavodoxin_2"/>
    <property type="match status" value="1"/>
</dbReference>
<dbReference type="SUPFAM" id="SSF52218">
    <property type="entry name" value="Flavoproteins"/>
    <property type="match status" value="1"/>
</dbReference>
<organism>
    <name type="scientific">Methylocella silvestris (strain DSM 15510 / CIP 108128 / LMG 27833 / NCIMB 13906 / BL2)</name>
    <dbReference type="NCBI Taxonomy" id="395965"/>
    <lineage>
        <taxon>Bacteria</taxon>
        <taxon>Pseudomonadati</taxon>
        <taxon>Pseudomonadota</taxon>
        <taxon>Alphaproteobacteria</taxon>
        <taxon>Hyphomicrobiales</taxon>
        <taxon>Beijerinckiaceae</taxon>
        <taxon>Methylocella</taxon>
    </lineage>
</organism>
<accession>B8EJL7</accession>
<reference key="1">
    <citation type="journal article" date="2010" name="J. Bacteriol.">
        <title>Complete genome sequence of the aerobic facultative methanotroph Methylocella silvestris BL2.</title>
        <authorList>
            <person name="Chen Y."/>
            <person name="Crombie A."/>
            <person name="Rahman M.T."/>
            <person name="Dedysh S.N."/>
            <person name="Liesack W."/>
            <person name="Stott M.B."/>
            <person name="Alam M."/>
            <person name="Theisen A.R."/>
            <person name="Murrell J.C."/>
            <person name="Dunfield P.F."/>
        </authorList>
    </citation>
    <scope>NUCLEOTIDE SEQUENCE [LARGE SCALE GENOMIC DNA]</scope>
    <source>
        <strain>DSM 15510 / CIP 108128 / LMG 27833 / NCIMB 13906 / BL2</strain>
    </source>
</reference>